<reference key="1">
    <citation type="journal article" date="2004" name="Science">
        <title>The Ashbya gossypii genome as a tool for mapping the ancient Saccharomyces cerevisiae genome.</title>
        <authorList>
            <person name="Dietrich F.S."/>
            <person name="Voegeli S."/>
            <person name="Brachat S."/>
            <person name="Lerch A."/>
            <person name="Gates K."/>
            <person name="Steiner S."/>
            <person name="Mohr C."/>
            <person name="Poehlmann R."/>
            <person name="Luedi P."/>
            <person name="Choi S."/>
            <person name="Wing R.A."/>
            <person name="Flavier A."/>
            <person name="Gaffney T.D."/>
            <person name="Philippsen P."/>
        </authorList>
    </citation>
    <scope>NUCLEOTIDE SEQUENCE [LARGE SCALE GENOMIC DNA]</scope>
    <source>
        <strain>ATCC 10895 / CBS 109.51 / FGSC 9923 / NRRL Y-1056</strain>
    </source>
</reference>
<reference key="2">
    <citation type="journal article" date="2013" name="G3 (Bethesda)">
        <title>Genomes of Ashbya fungi isolated from insects reveal four mating-type loci, numerous translocations, lack of transposons, and distinct gene duplications.</title>
        <authorList>
            <person name="Dietrich F.S."/>
            <person name="Voegeli S."/>
            <person name="Kuo S."/>
            <person name="Philippsen P."/>
        </authorList>
    </citation>
    <scope>GENOME REANNOTATION</scope>
    <source>
        <strain>ATCC 10895 / CBS 109.51 / FGSC 9923 / NRRL Y-1056</strain>
    </source>
</reference>
<evidence type="ECO:0000250" key="1"/>
<evidence type="ECO:0000255" key="2"/>
<evidence type="ECO:0000256" key="3">
    <source>
        <dbReference type="SAM" id="MobiDB-lite"/>
    </source>
</evidence>
<evidence type="ECO:0000305" key="4"/>
<protein>
    <recommendedName>
        <fullName>Metacaspase-1</fullName>
        <ecNumber>3.4.22.-</ecNumber>
    </recommendedName>
</protein>
<sequence>MYPGAGRPTYHKQQEQKGPYGQPQYQQQYAPPYPERYQQPYYQPPPHDGYSRPSMPPPSHNYAAAQYERPSCPPPGYAPHQGGFPAPGPPLQGRPRDLMRSDIQMNHSMDYSNIQGPASYTRPEFVAPPPQERQFLDPGNRSVEYQYSQCTGNRKALLIGINYFNSSAELRGCINDVQNIKNFLISRYGYREENMVILTDDQHDPVRIPTKANILRAMHWLVQGAQPNDSLFLHYSGHGGETEDLDGDEQDGKDSTLYPVDFETNGHIVDDEIHDILVKPLAPGVRLTALIDACHSGSALDLPYMYSTKGIIKEPNVWKDIGSNSMQAAMAYVTGNTGDMFTSLKSLASTVSRKATGSGGVDTERVRQTKFSPADVIMFSGSKDNQTSADAVENGVATGAMSYSFVKVMSQQPQQTYLSLLQNMRTELKGKYTQKPQLSCSHPLDVNLQFVL</sequence>
<name>MCA1_EREGS</name>
<proteinExistence type="inferred from homology"/>
<gene>
    <name type="primary">MCA1</name>
    <name type="ordered locus">ADL266C</name>
</gene>
<organism>
    <name type="scientific">Eremothecium gossypii (strain ATCC 10895 / CBS 109.51 / FGSC 9923 / NRRL Y-1056)</name>
    <name type="common">Yeast</name>
    <name type="synonym">Ashbya gossypii</name>
    <dbReference type="NCBI Taxonomy" id="284811"/>
    <lineage>
        <taxon>Eukaryota</taxon>
        <taxon>Fungi</taxon>
        <taxon>Dikarya</taxon>
        <taxon>Ascomycota</taxon>
        <taxon>Saccharomycotina</taxon>
        <taxon>Saccharomycetes</taxon>
        <taxon>Saccharomycetales</taxon>
        <taxon>Saccharomycetaceae</taxon>
        <taxon>Eremothecium</taxon>
    </lineage>
</organism>
<dbReference type="EC" id="3.4.22.-"/>
<dbReference type="EMBL" id="AE016817">
    <property type="protein sequence ID" value="AAS51654.1"/>
    <property type="molecule type" value="Genomic_DNA"/>
</dbReference>
<dbReference type="RefSeq" id="NP_983830.1">
    <property type="nucleotide sequence ID" value="NM_209183.1"/>
</dbReference>
<dbReference type="SMR" id="Q75B43"/>
<dbReference type="FunCoup" id="Q75B43">
    <property type="interactions" value="391"/>
</dbReference>
<dbReference type="STRING" id="284811.Q75B43"/>
<dbReference type="MEROPS" id="C14.035"/>
<dbReference type="EnsemblFungi" id="AAS51654">
    <property type="protein sequence ID" value="AAS51654"/>
    <property type="gene ID" value="AGOS_ADL266C"/>
</dbReference>
<dbReference type="GeneID" id="4619965"/>
<dbReference type="KEGG" id="ago:AGOS_ADL266C"/>
<dbReference type="eggNOG" id="KOG1546">
    <property type="taxonomic scope" value="Eukaryota"/>
</dbReference>
<dbReference type="HOGENOM" id="CLU_029389_0_2_1"/>
<dbReference type="InParanoid" id="Q75B43"/>
<dbReference type="OMA" id="MHRIMVT"/>
<dbReference type="OrthoDB" id="3223806at2759"/>
<dbReference type="Proteomes" id="UP000000591">
    <property type="component" value="Chromosome IV"/>
</dbReference>
<dbReference type="GO" id="GO:0005737">
    <property type="term" value="C:cytoplasm"/>
    <property type="evidence" value="ECO:0000318"/>
    <property type="project" value="GO_Central"/>
</dbReference>
<dbReference type="GO" id="GO:0005829">
    <property type="term" value="C:cytosol"/>
    <property type="evidence" value="ECO:0007669"/>
    <property type="project" value="EnsemblFungi"/>
</dbReference>
<dbReference type="GO" id="GO:0005634">
    <property type="term" value="C:nucleus"/>
    <property type="evidence" value="ECO:0007669"/>
    <property type="project" value="EnsemblFungi"/>
</dbReference>
<dbReference type="GO" id="GO:0004198">
    <property type="term" value="F:calcium-dependent cysteine-type endopeptidase activity"/>
    <property type="evidence" value="ECO:0007669"/>
    <property type="project" value="EnsemblFungi"/>
</dbReference>
<dbReference type="GO" id="GO:0004197">
    <property type="term" value="F:cysteine-type endopeptidase activity"/>
    <property type="evidence" value="ECO:0000318"/>
    <property type="project" value="GO_Central"/>
</dbReference>
<dbReference type="GO" id="GO:0006915">
    <property type="term" value="P:apoptotic process"/>
    <property type="evidence" value="ECO:0007669"/>
    <property type="project" value="UniProtKB-KW"/>
</dbReference>
<dbReference type="GO" id="GO:0006515">
    <property type="term" value="P:protein quality control for misfolded or incompletely synthesized proteins"/>
    <property type="evidence" value="ECO:0007669"/>
    <property type="project" value="EnsemblFungi"/>
</dbReference>
<dbReference type="GO" id="GO:0006508">
    <property type="term" value="P:proteolysis"/>
    <property type="evidence" value="ECO:0000318"/>
    <property type="project" value="GO_Central"/>
</dbReference>
<dbReference type="Gene3D" id="3.40.50.12660">
    <property type="match status" value="1"/>
</dbReference>
<dbReference type="InterPro" id="IPR029030">
    <property type="entry name" value="Caspase-like_dom_sf"/>
</dbReference>
<dbReference type="InterPro" id="IPR050452">
    <property type="entry name" value="Metacaspase"/>
</dbReference>
<dbReference type="InterPro" id="IPR011600">
    <property type="entry name" value="Pept_C14_caspase"/>
</dbReference>
<dbReference type="PANTHER" id="PTHR48104:SF30">
    <property type="entry name" value="METACASPASE-1"/>
    <property type="match status" value="1"/>
</dbReference>
<dbReference type="PANTHER" id="PTHR48104">
    <property type="entry name" value="METACASPASE-4"/>
    <property type="match status" value="1"/>
</dbReference>
<dbReference type="Pfam" id="PF00656">
    <property type="entry name" value="Peptidase_C14"/>
    <property type="match status" value="1"/>
</dbReference>
<dbReference type="SUPFAM" id="SSF52129">
    <property type="entry name" value="Caspase-like"/>
    <property type="match status" value="1"/>
</dbReference>
<accession>Q75B43</accession>
<comment type="function">
    <text evidence="1">Involved in cell death (apoptosis).</text>
</comment>
<comment type="similarity">
    <text evidence="4">Belongs to the peptidase C14B family.</text>
</comment>
<keyword id="KW-0053">Apoptosis</keyword>
<keyword id="KW-0378">Hydrolase</keyword>
<keyword id="KW-0645">Protease</keyword>
<keyword id="KW-1185">Reference proteome</keyword>
<keyword id="KW-0788">Thiol protease</keyword>
<keyword id="KW-0865">Zymogen</keyword>
<feature type="propeptide" id="PRO_0000333610" evidence="2">
    <location>
        <begin position="1"/>
        <end status="unknown"/>
    </location>
</feature>
<feature type="chain" id="PRO_0000333611" description="Metacaspase-1">
    <location>
        <begin status="unknown"/>
        <end position="452"/>
    </location>
</feature>
<feature type="region of interest" description="Disordered" evidence="3">
    <location>
        <begin position="1"/>
        <end position="97"/>
    </location>
</feature>
<feature type="compositionally biased region" description="Low complexity" evidence="3">
    <location>
        <begin position="16"/>
        <end position="41"/>
    </location>
</feature>
<feature type="active site" evidence="1">
    <location>
        <position position="238"/>
    </location>
</feature>
<feature type="active site" evidence="1">
    <location>
        <position position="294"/>
    </location>
</feature>